<protein>
    <recommendedName>
        <fullName evidence="7">Polymeric immunoglobulin receptor</fullName>
        <shortName evidence="7">PIgR</shortName>
        <shortName>Poly-Ig receptor</shortName>
    </recommendedName>
    <component>
        <recommendedName>
            <fullName evidence="7">Secretory component</fullName>
        </recommendedName>
    </component>
</protein>
<organism>
    <name type="scientific">Equus asinus</name>
    <name type="common">Donkey</name>
    <name type="synonym">Equus africanus asinus</name>
    <dbReference type="NCBI Taxonomy" id="9793"/>
    <lineage>
        <taxon>Eukaryota</taxon>
        <taxon>Metazoa</taxon>
        <taxon>Chordata</taxon>
        <taxon>Craniata</taxon>
        <taxon>Vertebrata</taxon>
        <taxon>Euteleostomi</taxon>
        <taxon>Mammalia</taxon>
        <taxon>Eutheria</taxon>
        <taxon>Laurasiatheria</taxon>
        <taxon>Perissodactyla</taxon>
        <taxon>Equidae</taxon>
        <taxon>Equus</taxon>
    </lineage>
</organism>
<gene>
    <name type="primary">PIGR</name>
</gene>
<name>PIGR_EQUAS</name>
<feature type="signal peptide" evidence="2">
    <location>
        <begin position="1"/>
        <end position="18"/>
    </location>
</feature>
<feature type="chain" id="PRO_0000451035" description="Polymeric immunoglobulin receptor" evidence="2">
    <location>
        <begin position="19"/>
        <end position="762"/>
    </location>
</feature>
<feature type="chain" id="PRO_0000451036" description="Secretory component" evidence="1">
    <location>
        <begin position="19"/>
        <end position="602"/>
    </location>
</feature>
<feature type="topological domain" description="Extracellular" evidence="2">
    <location>
        <begin position="19"/>
        <end position="636"/>
    </location>
</feature>
<feature type="transmembrane region" description="Helical" evidence="2">
    <location>
        <begin position="637"/>
        <end position="659"/>
    </location>
</feature>
<feature type="topological domain" description="Cytoplasmic" evidence="2">
    <location>
        <begin position="660"/>
        <end position="762"/>
    </location>
</feature>
<feature type="domain" description="Ig-like V-type 1; required for binding to polymeric IgA and IgM" evidence="1 3">
    <location>
        <begin position="19"/>
        <end position="120"/>
    </location>
</feature>
<feature type="domain" description="Ig-like V-type 2" evidence="1">
    <location>
        <begin position="145"/>
        <end position="238"/>
    </location>
</feature>
<feature type="domain" description="Ig-like V-type 3" evidence="1">
    <location>
        <begin position="251"/>
        <end position="351"/>
    </location>
</feature>
<feature type="domain" description="Ig-like V-type 4" evidence="1">
    <location>
        <begin position="363"/>
        <end position="460"/>
    </location>
</feature>
<feature type="domain" description="Ig-like V-type 5" evidence="1 3">
    <location>
        <begin position="464"/>
        <end position="563"/>
    </location>
</feature>
<feature type="region of interest" description="Disordered" evidence="4">
    <location>
        <begin position="604"/>
        <end position="634"/>
    </location>
</feature>
<feature type="glycosylation site" description="N-linked (GlcNAc...) asparagine" evidence="6">
    <location>
        <position position="83"/>
    </location>
</feature>
<feature type="glycosylation site" description="N-linked (GlcNAc...) asparagine" evidence="6">
    <location>
        <position position="135"/>
    </location>
</feature>
<feature type="glycosylation site" description="N-linked (GlcNAc...) asparagine" evidence="6">
    <location>
        <position position="291"/>
    </location>
</feature>
<feature type="glycosylation site" description="N-linked (GlcNAc...) asparagine" evidence="6">
    <location>
        <position position="423"/>
    </location>
</feature>
<feature type="glycosylation site" description="N-linked (GlcNAc...) asparagine" evidence="6">
    <location>
        <position position="530"/>
    </location>
</feature>
<feature type="disulfide bond" evidence="1 3">
    <location>
        <begin position="40"/>
        <end position="110"/>
    </location>
</feature>
<feature type="disulfide bond" evidence="1 3">
    <location>
        <begin position="56"/>
        <end position="64"/>
    </location>
</feature>
<feature type="disulfide bond" evidence="1 3">
    <location>
        <begin position="152"/>
        <end position="221"/>
    </location>
</feature>
<feature type="disulfide bond" evidence="1 3">
    <location>
        <begin position="258"/>
        <end position="324"/>
    </location>
</feature>
<feature type="disulfide bond" evidence="1 3">
    <location>
        <begin position="272"/>
        <end position="280"/>
    </location>
</feature>
<feature type="disulfide bond" evidence="1 3">
    <location>
        <begin position="370"/>
        <end position="443"/>
    </location>
</feature>
<feature type="disulfide bond" evidence="1 3">
    <location>
        <begin position="384"/>
        <end position="394"/>
    </location>
</feature>
<feature type="disulfide bond" evidence="1 3">
    <location>
        <begin position="484"/>
        <end position="546"/>
    </location>
</feature>
<feature type="disulfide bond" evidence="1 3">
    <location>
        <begin position="488"/>
        <end position="522"/>
    </location>
</feature>
<feature type="disulfide bond" evidence="1 3">
    <location>
        <begin position="498"/>
        <end position="505"/>
    </location>
</feature>
<feature type="disulfide bond" description="Interchain (with C-184 IGHA/constant region of IgA heavy chain)" evidence="1">
    <location>
        <position position="505"/>
    </location>
</feature>
<sequence length="762" mass="82964">MTLFFLTCLLAVFPVVSMKSPIFGPPEIDSVEGTSTSIKCYYPPTSVNRHSRKYWCRQGPKGQCITLISSNGYVSKDYEGRANLTNFPESGTFVVNVDHLIQGDSGSYKCGVGINNRGLSFDVRLRVVPGSGVLNGTQVYAEDLGGKVSISCPFTSANLPNVKSVCKQIADKHCVRVIDSAGYKEPSYEGRAKLIIQGTTQTEFFFIIDQLQVEDDGKYVCQAGDDSSGDKSNVDLHVLKPEPELVYADLGSSVRFDCALGPEVVNVAKFLCQKNKEKTCNLVANTLGQRNQTFKGRILSQNNNGVFSVDITNLRKEDAGLYLCGANSDGQPQKSRPIQAWQLFVNEETTFPSRPSVVKGVVGGSVAVLCPYNPKEVNSVKSWCRWEDTQNGGCPLLVQSTGLVKNQYEQYNGRLVLYDEPGNGTYTVILNQLTAQDAGFYWCLTNGDIHWRSTVELKIVEGQPNLKVPKTVNVELGETVQLTCHSPCKFYSYKKFWCKWTDQGCSALPSQDEGSGQAVVNCDQNSQLINLTLKQVTKGDEGWYWCGVKEGLQYKETVAVYVAVKEKGTGSGALSSVRAAPAEDVIETSVRKVDRKVVQDPRLFVDTQAKDPEDAAGGSIASADPGSSAGQGGSSKVVVSTLVPLALVLALGVLVVGVLRARHRKNVDRISIRSYRTDISMSDFENSRDFGANDNMGASPVSQETTLGGKDEFIATTENTVETEEPKKAKRSSKEEADMAYTAFLLQANNMAANIQDGPSKA</sequence>
<keyword id="KW-1003">Cell membrane</keyword>
<keyword id="KW-0903">Direct protein sequencing</keyword>
<keyword id="KW-1015">Disulfide bond</keyword>
<keyword id="KW-0325">Glycoprotein</keyword>
<keyword id="KW-0393">Immunoglobulin domain</keyword>
<keyword id="KW-0472">Membrane</keyword>
<keyword id="KW-1185">Reference proteome</keyword>
<keyword id="KW-0964">Secreted</keyword>
<keyword id="KW-0732">Signal</keyword>
<keyword id="KW-0812">Transmembrane</keyword>
<keyword id="KW-1133">Transmembrane helix</keyword>
<keyword id="KW-0813">Transport</keyword>
<comment type="function">
    <molecule>Polymeric immunoglobulin receptor</molecule>
    <text evidence="1">Mediates selective transcytosis of polymeric IgA and IgM across mucosal epithelial cells. Binds polymeric IgA and IgM at the basolateral surface of epithelial cells. The complex is then transported across the cell to be secreted at the apical surface. During this process, a cleavage occurs that separates the extracellular (known as the secretory component) from the transmembrane segment.</text>
</comment>
<comment type="function">
    <molecule>Secretory component</molecule>
    <text evidence="1">Through its N-linked glycans ensures anchoring of secretory IgA (sIgA) molecules to mucus lining the epithelial surface to neutralize extracellular pathogens. On its own (free form) may act as a non-specific microbial scavenger to prevent pathogen interaction with epithelial cells.</text>
</comment>
<comment type="subunit">
    <text evidence="1">Interacts (mainly via CDR1-like domain) with dimeric IgA. Interacts (mainly via CDR2-like domain) with pentameric IgM.</text>
</comment>
<comment type="subunit">
    <molecule>Secretory component</molecule>
    <text evidence="1">Either free or part of the secretory IgA (sIgA) complex that consists of two, four or five IgA monomers, and two additional non-Ig polypeptides, namely the JCHAIN and the secretory component (the proteolytic product of PIGR). Free secretory component interacts with bacterial antigens toxA of C.difficile and eae of E.coli.</text>
</comment>
<comment type="subcellular location">
    <molecule>Polymeric immunoglobulin receptor</molecule>
    <subcellularLocation>
        <location evidence="1">Cell membrane</location>
        <topology evidence="2">Single-pass type I membrane protein</topology>
    </subcellularLocation>
</comment>
<comment type="subcellular location">
    <molecule>Secretory component</molecule>
    <subcellularLocation>
        <location evidence="5 6">Secreted</location>
    </subcellularLocation>
</comment>
<comment type="domain">
    <text evidence="1">The Ig-like V-type 1/D1 domain contains three complementarity determining region-like loops CDR1-3, which mediate interaction with IgA and IgM.</text>
</comment>
<comment type="PTM">
    <text evidence="6">N-glycosylated. Carries predominantly biantennary complex type glycans which are largely non-fucosylated. Sialylation with NeuAc is common, except for Asn-291 which carries exclusively high mannose glycans. N-glycans attached to Asn-83: Gal2GlcNAc2Man3GlcNAc2; Gal2GlcNAc2Man3GlcNAc2(Fuc); Gal1GlcNAc1Man4GlcNAc2(Fuc); Gal1GlcNAc1Man3GlcNAc2; Gal1GlcNAc1Man4GlcNAc2 and NeuAc1Gal2GlcNAc2Man3GlcNAc2. N-glycans attached to Asn-135: Gal2GlcNAc2Man3GlcNAc2; Gal1GlcNAc1Man3GlcNAc2 and NeuAc1Gal2GlcNAc2Man3GlcNAc2. N-glycans attached to Asn-291: Man5-8GlcNAc2. N-glycans attached to Asn-423: NeuAc1Gal2GlcNAc2Man3GlcNAc2. N-glycans attached to Asn-530: Gal2GlcNAc2Man3GlcNAc2; Gal1GlcNAc1Man3GlcNAc2 and NeuAc1Gal2GlcNAc2Man3GlcNAc2. N-glycosylation is required for anchoring IgA molecules to mucus but is not necessary for Ig binding.</text>
</comment>
<proteinExistence type="evidence at protein level"/>
<dbReference type="RefSeq" id="XP_014684365.1">
    <property type="nucleotide sequence ID" value="XM_014828879.1"/>
</dbReference>
<dbReference type="RefSeq" id="XP_014684370.1">
    <property type="nucleotide sequence ID" value="XM_014828884.1"/>
</dbReference>
<dbReference type="RefSeq" id="XP_014684378.1">
    <property type="nucleotide sequence ID" value="XM_014828892.1"/>
</dbReference>
<dbReference type="SMR" id="P0DUB1"/>
<dbReference type="GlyCosmos" id="P0DUB1">
    <property type="glycosylation" value="5 sites, No reported glycans"/>
</dbReference>
<dbReference type="iPTMnet" id="P0DUB1"/>
<dbReference type="GeneID" id="106823294"/>
<dbReference type="KEGG" id="eai:106823294"/>
<dbReference type="CTD" id="5284"/>
<dbReference type="Proteomes" id="UP000694387">
    <property type="component" value="Unplaced"/>
</dbReference>
<dbReference type="GO" id="GO:0005576">
    <property type="term" value="C:extracellular region"/>
    <property type="evidence" value="ECO:0007669"/>
    <property type="project" value="UniProtKB-SubCell"/>
</dbReference>
<dbReference type="GO" id="GO:0005886">
    <property type="term" value="C:plasma membrane"/>
    <property type="evidence" value="ECO:0007669"/>
    <property type="project" value="UniProtKB-SubCell"/>
</dbReference>
<dbReference type="GO" id="GO:0004888">
    <property type="term" value="F:transmembrane signaling receptor activity"/>
    <property type="evidence" value="ECO:0007669"/>
    <property type="project" value="TreeGrafter"/>
</dbReference>
<dbReference type="CDD" id="cd05716">
    <property type="entry name" value="IgV_pIgR_like"/>
    <property type="match status" value="4"/>
</dbReference>
<dbReference type="FunFam" id="2.60.40.10:FF:001340">
    <property type="entry name" value="Polymeric immunoglobulin receptor"/>
    <property type="match status" value="1"/>
</dbReference>
<dbReference type="Gene3D" id="2.60.40.10">
    <property type="entry name" value="Immunoglobulins"/>
    <property type="match status" value="5"/>
</dbReference>
<dbReference type="InterPro" id="IPR050671">
    <property type="entry name" value="CD300_family_receptors"/>
</dbReference>
<dbReference type="InterPro" id="IPR007110">
    <property type="entry name" value="Ig-like_dom"/>
</dbReference>
<dbReference type="InterPro" id="IPR036179">
    <property type="entry name" value="Ig-like_dom_sf"/>
</dbReference>
<dbReference type="InterPro" id="IPR013783">
    <property type="entry name" value="Ig-like_fold"/>
</dbReference>
<dbReference type="InterPro" id="IPR003599">
    <property type="entry name" value="Ig_sub"/>
</dbReference>
<dbReference type="InterPro" id="IPR013106">
    <property type="entry name" value="Ig_V-set"/>
</dbReference>
<dbReference type="PANTHER" id="PTHR11860:SF82">
    <property type="entry name" value="POLYMERIC IMMUNOGLOBULIN RECEPTOR"/>
    <property type="match status" value="1"/>
</dbReference>
<dbReference type="PANTHER" id="PTHR11860">
    <property type="entry name" value="POLYMERIC-IMMUNOGLOBULIN RECEPTOR"/>
    <property type="match status" value="1"/>
</dbReference>
<dbReference type="Pfam" id="PF07686">
    <property type="entry name" value="V-set"/>
    <property type="match status" value="5"/>
</dbReference>
<dbReference type="SMART" id="SM00409">
    <property type="entry name" value="IG"/>
    <property type="match status" value="5"/>
</dbReference>
<dbReference type="SMART" id="SM00406">
    <property type="entry name" value="IGv"/>
    <property type="match status" value="3"/>
</dbReference>
<dbReference type="SUPFAM" id="SSF48726">
    <property type="entry name" value="Immunoglobulin"/>
    <property type="match status" value="5"/>
</dbReference>
<dbReference type="PROSITE" id="PS50835">
    <property type="entry name" value="IG_LIKE"/>
    <property type="match status" value="2"/>
</dbReference>
<reference key="1">
    <citation type="journal article" date="2015" name="Sci. Rep.">
        <title>Donkey genome and insight into the imprinting of fast karyotype evolution.</title>
        <authorList>
            <person name="Huang J."/>
            <person name="Zhao Y."/>
            <person name="Bai D."/>
            <person name="Shiraigol W."/>
            <person name="Li B."/>
            <person name="Yang L."/>
            <person name="Wu J."/>
            <person name="Bao W."/>
            <person name="Ren X."/>
            <person name="Jin B."/>
            <person name="Zhao Q."/>
            <person name="Li A."/>
            <person name="Bao S."/>
            <person name="Bao W."/>
            <person name="Xing Z."/>
            <person name="An A."/>
            <person name="Gao Y."/>
            <person name="Wei R."/>
            <person name="Bao Y."/>
            <person name="Bao T."/>
            <person name="Han H."/>
            <person name="Bai H."/>
            <person name="Bao Y."/>
            <person name="Zhang Y."/>
            <person name="Daidiikhuu D."/>
            <person name="Zhao W."/>
            <person name="Liu S."/>
            <person name="Ding J."/>
            <person name="Ye W."/>
            <person name="Ding F."/>
            <person name="Sun Z."/>
            <person name="Shi Y."/>
            <person name="Zhang Y."/>
            <person name="Meng H."/>
            <person name="Dugarjaviin M."/>
        </authorList>
    </citation>
    <scope>NUCLEOTIDE SEQUENCE [LARGE SCALE MRNA]</scope>
    <source>
        <tissue>Peripheral blood leukocyte</tissue>
    </source>
</reference>
<reference key="2">
    <citation type="journal article" date="2020" name="Int. J. Biol. Macromol.">
        <title>Sequence characterization and N-glycoproteomics of secretory immunoglobulin A from donkey milk.</title>
        <authorList>
            <person name="Gnanesh Kumar B.S."/>
            <person name="Rawal A."/>
        </authorList>
    </citation>
    <scope>PROTEIN SEQUENCE OF 19-49; 110-163; 232-269; 279-290; 298-334; 386-405; 471-489; 539-549; 556-565 AND 579-591</scope>
    <scope>IDENTIFICATION BY MASS SPECTROMETRY</scope>
    <scope>GLYCOSYLATION AT ASN-83; ASN-135; ASN-291; ASN-423 AND ASN-530</scope>
    <scope>SUBCELLULAR LOCATION (SECRETORY COMPONENT)</scope>
</reference>
<reference key="3">
    <citation type="journal article" date="2011" name="J. Proteomics">
        <title>Poppea's bath liquor: the secret proteome of she-donkey's milk.</title>
        <authorList>
            <person name="Cunsolo V."/>
            <person name="Muccilli V."/>
            <person name="Fasoli E."/>
            <person name="Saletti R."/>
            <person name="Righetti P.G."/>
            <person name="Foti S."/>
        </authorList>
    </citation>
    <scope>PROTEIN SEQUENCE OF 20-39; 148-163; 232-269; 360-375; 459-489 AND 566-578</scope>
    <scope>IDENTIFICATION BY MASS SPECTROMETRY</scope>
    <scope>SUBCELLULAR LOCATION (SECRETORY COMPONENT)</scope>
</reference>
<evidence type="ECO:0000250" key="1">
    <source>
        <dbReference type="UniProtKB" id="P01833"/>
    </source>
</evidence>
<evidence type="ECO:0000255" key="2"/>
<evidence type="ECO:0000255" key="3">
    <source>
        <dbReference type="PROSITE-ProRule" id="PRU00114"/>
    </source>
</evidence>
<evidence type="ECO:0000256" key="4">
    <source>
        <dbReference type="SAM" id="MobiDB-lite"/>
    </source>
</evidence>
<evidence type="ECO:0000269" key="5">
    <source>
    </source>
</evidence>
<evidence type="ECO:0000269" key="6">
    <source>
    </source>
</evidence>
<evidence type="ECO:0000303" key="7">
    <source>
    </source>
</evidence>
<accession>P0DUB1</accession>